<accession>Q3SRQ7</accession>
<keyword id="KW-0963">Cytoplasm</keyword>
<keyword id="KW-0489">Methyltransferase</keyword>
<keyword id="KW-1185">Reference proteome</keyword>
<keyword id="KW-0949">S-adenosyl-L-methionine</keyword>
<keyword id="KW-0808">Transferase</keyword>
<organism>
    <name type="scientific">Nitrobacter winogradskyi (strain ATCC 25391 / DSM 10237 / CIP 104748 / NCIMB 11846 / Nb-255)</name>
    <dbReference type="NCBI Taxonomy" id="323098"/>
    <lineage>
        <taxon>Bacteria</taxon>
        <taxon>Pseudomonadati</taxon>
        <taxon>Pseudomonadota</taxon>
        <taxon>Alphaproteobacteria</taxon>
        <taxon>Hyphomicrobiales</taxon>
        <taxon>Nitrobacteraceae</taxon>
        <taxon>Nitrobacter</taxon>
    </lineage>
</organism>
<proteinExistence type="inferred from homology"/>
<feature type="chain" id="PRO_0000351884" description="Protein-L-isoaspartate O-methyltransferase">
    <location>
        <begin position="1"/>
        <end position="217"/>
    </location>
</feature>
<feature type="active site" evidence="1">
    <location>
        <position position="64"/>
    </location>
</feature>
<protein>
    <recommendedName>
        <fullName evidence="1">Protein-L-isoaspartate O-methyltransferase</fullName>
        <ecNumber evidence="1">2.1.1.77</ecNumber>
    </recommendedName>
    <alternativeName>
        <fullName evidence="1">L-isoaspartyl protein carboxyl methyltransferase</fullName>
    </alternativeName>
    <alternativeName>
        <fullName evidence="1">Protein L-isoaspartyl methyltransferase</fullName>
    </alternativeName>
    <alternativeName>
        <fullName evidence="1">Protein-beta-aspartate methyltransferase</fullName>
        <shortName evidence="1">PIMT</shortName>
    </alternativeName>
</protein>
<dbReference type="EC" id="2.1.1.77" evidence="1"/>
<dbReference type="EMBL" id="CP000115">
    <property type="protein sequence ID" value="ABA05034.1"/>
    <property type="molecule type" value="Genomic_DNA"/>
</dbReference>
<dbReference type="RefSeq" id="WP_011315030.1">
    <property type="nucleotide sequence ID" value="NC_007406.1"/>
</dbReference>
<dbReference type="SMR" id="Q3SRQ7"/>
<dbReference type="STRING" id="323098.Nwi_1773"/>
<dbReference type="KEGG" id="nwi:Nwi_1773"/>
<dbReference type="eggNOG" id="COG2518">
    <property type="taxonomic scope" value="Bacteria"/>
</dbReference>
<dbReference type="HOGENOM" id="CLU_055432_2_0_5"/>
<dbReference type="OrthoDB" id="9810066at2"/>
<dbReference type="Proteomes" id="UP000002531">
    <property type="component" value="Chromosome"/>
</dbReference>
<dbReference type="GO" id="GO:0005737">
    <property type="term" value="C:cytoplasm"/>
    <property type="evidence" value="ECO:0007669"/>
    <property type="project" value="UniProtKB-SubCell"/>
</dbReference>
<dbReference type="GO" id="GO:0004719">
    <property type="term" value="F:protein-L-isoaspartate (D-aspartate) O-methyltransferase activity"/>
    <property type="evidence" value="ECO:0007669"/>
    <property type="project" value="UniProtKB-UniRule"/>
</dbReference>
<dbReference type="GO" id="GO:0032259">
    <property type="term" value="P:methylation"/>
    <property type="evidence" value="ECO:0007669"/>
    <property type="project" value="UniProtKB-KW"/>
</dbReference>
<dbReference type="GO" id="GO:0036211">
    <property type="term" value="P:protein modification process"/>
    <property type="evidence" value="ECO:0007669"/>
    <property type="project" value="UniProtKB-UniRule"/>
</dbReference>
<dbReference type="GO" id="GO:0030091">
    <property type="term" value="P:protein repair"/>
    <property type="evidence" value="ECO:0007669"/>
    <property type="project" value="UniProtKB-UniRule"/>
</dbReference>
<dbReference type="CDD" id="cd02440">
    <property type="entry name" value="AdoMet_MTases"/>
    <property type="match status" value="1"/>
</dbReference>
<dbReference type="FunFam" id="3.40.50.150:FF:000010">
    <property type="entry name" value="Protein-L-isoaspartate O-methyltransferase"/>
    <property type="match status" value="1"/>
</dbReference>
<dbReference type="Gene3D" id="3.40.50.150">
    <property type="entry name" value="Vaccinia Virus protein VP39"/>
    <property type="match status" value="1"/>
</dbReference>
<dbReference type="HAMAP" id="MF_00090">
    <property type="entry name" value="PIMT"/>
    <property type="match status" value="1"/>
</dbReference>
<dbReference type="InterPro" id="IPR000682">
    <property type="entry name" value="PCMT"/>
</dbReference>
<dbReference type="InterPro" id="IPR029063">
    <property type="entry name" value="SAM-dependent_MTases_sf"/>
</dbReference>
<dbReference type="NCBIfam" id="TIGR00080">
    <property type="entry name" value="pimt"/>
    <property type="match status" value="1"/>
</dbReference>
<dbReference type="NCBIfam" id="NF001453">
    <property type="entry name" value="PRK00312.1"/>
    <property type="match status" value="1"/>
</dbReference>
<dbReference type="PANTHER" id="PTHR11579">
    <property type="entry name" value="PROTEIN-L-ISOASPARTATE O-METHYLTRANSFERASE"/>
    <property type="match status" value="1"/>
</dbReference>
<dbReference type="PANTHER" id="PTHR11579:SF0">
    <property type="entry name" value="PROTEIN-L-ISOASPARTATE(D-ASPARTATE) O-METHYLTRANSFERASE"/>
    <property type="match status" value="1"/>
</dbReference>
<dbReference type="Pfam" id="PF01135">
    <property type="entry name" value="PCMT"/>
    <property type="match status" value="1"/>
</dbReference>
<dbReference type="SUPFAM" id="SSF53335">
    <property type="entry name" value="S-adenosyl-L-methionine-dependent methyltransferases"/>
    <property type="match status" value="1"/>
</dbReference>
<sequence>MPPADHPPPEKMMFQLNLRRRGISDQRVLRAMDNVPRDAFVEQGDREDAWCDTALGIACGQTISQPFVVAYMTERLELGDDQRVLEIGTGSGYQTAILSRLCREVVTVERYRVLADRARARLKHLGYDNVEVLLGDGFDIPGEAGRFDRIMVTAAMEQIPEALTARLEPDGLLIAPVGPQSGRQTLILLRRAPAGMIRKELIDVRFVPALPGIAREL</sequence>
<gene>
    <name evidence="1" type="primary">pcm</name>
    <name type="ordered locus">Nwi_1773</name>
</gene>
<name>PIMT_NITWN</name>
<reference key="1">
    <citation type="journal article" date="2006" name="Appl. Environ. Microbiol.">
        <title>Genome sequence of the chemolithoautotrophic nitrite-oxidizing bacterium Nitrobacter winogradskyi Nb-255.</title>
        <authorList>
            <person name="Starkenburg S.R."/>
            <person name="Chain P.S.G."/>
            <person name="Sayavedra-Soto L.A."/>
            <person name="Hauser L."/>
            <person name="Land M.L."/>
            <person name="Larimer F.W."/>
            <person name="Malfatti S.A."/>
            <person name="Klotz M.G."/>
            <person name="Bottomley P.J."/>
            <person name="Arp D.J."/>
            <person name="Hickey W.J."/>
        </authorList>
    </citation>
    <scope>NUCLEOTIDE SEQUENCE [LARGE SCALE GENOMIC DNA]</scope>
    <source>
        <strain>ATCC 25391 / DSM 10237 / CIP 104748 / NCIMB 11846 / Nb-255</strain>
    </source>
</reference>
<evidence type="ECO:0000255" key="1">
    <source>
        <dbReference type="HAMAP-Rule" id="MF_00090"/>
    </source>
</evidence>
<comment type="function">
    <text evidence="1">Catalyzes the methyl esterification of L-isoaspartyl residues in peptides and proteins that result from spontaneous decomposition of normal L-aspartyl and L-asparaginyl residues. It plays a role in the repair and/or degradation of damaged proteins.</text>
</comment>
<comment type="catalytic activity">
    <reaction evidence="1">
        <text>[protein]-L-isoaspartate + S-adenosyl-L-methionine = [protein]-L-isoaspartate alpha-methyl ester + S-adenosyl-L-homocysteine</text>
        <dbReference type="Rhea" id="RHEA:12705"/>
        <dbReference type="Rhea" id="RHEA-COMP:12143"/>
        <dbReference type="Rhea" id="RHEA-COMP:12144"/>
        <dbReference type="ChEBI" id="CHEBI:57856"/>
        <dbReference type="ChEBI" id="CHEBI:59789"/>
        <dbReference type="ChEBI" id="CHEBI:90596"/>
        <dbReference type="ChEBI" id="CHEBI:90598"/>
        <dbReference type="EC" id="2.1.1.77"/>
    </reaction>
</comment>
<comment type="subcellular location">
    <subcellularLocation>
        <location evidence="1">Cytoplasm</location>
    </subcellularLocation>
</comment>
<comment type="similarity">
    <text evidence="1">Belongs to the methyltransferase superfamily. L-isoaspartyl/D-aspartyl protein methyltransferase family.</text>
</comment>